<proteinExistence type="inferred from homology"/>
<dbReference type="EC" id="1.2.1.8" evidence="1"/>
<dbReference type="EMBL" id="CP000800">
    <property type="protein sequence ID" value="ABV18550.1"/>
    <property type="molecule type" value="Genomic_DNA"/>
</dbReference>
<dbReference type="RefSeq" id="WP_000089097.1">
    <property type="nucleotide sequence ID" value="NC_009801.1"/>
</dbReference>
<dbReference type="SMR" id="A7ZI51"/>
<dbReference type="KEGG" id="ecw:EcE24377A_0327"/>
<dbReference type="HOGENOM" id="CLU_005391_0_1_6"/>
<dbReference type="UniPathway" id="UPA00529">
    <property type="reaction ID" value="UER00386"/>
</dbReference>
<dbReference type="Proteomes" id="UP000001122">
    <property type="component" value="Chromosome"/>
</dbReference>
<dbReference type="GO" id="GO:0008802">
    <property type="term" value="F:betaine-aldehyde dehydrogenase (NAD+) activity"/>
    <property type="evidence" value="ECO:0007669"/>
    <property type="project" value="UniProtKB-UniRule"/>
</dbReference>
<dbReference type="GO" id="GO:0046872">
    <property type="term" value="F:metal ion binding"/>
    <property type="evidence" value="ECO:0007669"/>
    <property type="project" value="UniProtKB-KW"/>
</dbReference>
<dbReference type="GO" id="GO:0019285">
    <property type="term" value="P:glycine betaine biosynthetic process from choline"/>
    <property type="evidence" value="ECO:0007669"/>
    <property type="project" value="UniProtKB-UniRule"/>
</dbReference>
<dbReference type="CDD" id="cd07090">
    <property type="entry name" value="ALDH_F9_TMBADH"/>
    <property type="match status" value="1"/>
</dbReference>
<dbReference type="FunFam" id="3.40.309.10:FF:000014">
    <property type="entry name" value="NAD/NADP-dependent betaine aldehyde dehydrogenase"/>
    <property type="match status" value="1"/>
</dbReference>
<dbReference type="FunFam" id="3.40.605.10:FF:000007">
    <property type="entry name" value="NAD/NADP-dependent betaine aldehyde dehydrogenase"/>
    <property type="match status" value="1"/>
</dbReference>
<dbReference type="Gene3D" id="3.40.605.10">
    <property type="entry name" value="Aldehyde Dehydrogenase, Chain A, domain 1"/>
    <property type="match status" value="1"/>
</dbReference>
<dbReference type="Gene3D" id="3.40.309.10">
    <property type="entry name" value="Aldehyde Dehydrogenase, Chain A, domain 2"/>
    <property type="match status" value="1"/>
</dbReference>
<dbReference type="HAMAP" id="MF_00804">
    <property type="entry name" value="BADH"/>
    <property type="match status" value="1"/>
</dbReference>
<dbReference type="InterPro" id="IPR016161">
    <property type="entry name" value="Ald_DH/histidinol_DH"/>
</dbReference>
<dbReference type="InterPro" id="IPR016163">
    <property type="entry name" value="Ald_DH_C"/>
</dbReference>
<dbReference type="InterPro" id="IPR016160">
    <property type="entry name" value="Ald_DH_CS_CYS"/>
</dbReference>
<dbReference type="InterPro" id="IPR029510">
    <property type="entry name" value="Ald_DH_CS_GLU"/>
</dbReference>
<dbReference type="InterPro" id="IPR016162">
    <property type="entry name" value="Ald_DH_N"/>
</dbReference>
<dbReference type="InterPro" id="IPR015590">
    <property type="entry name" value="Aldehyde_DH_dom"/>
</dbReference>
<dbReference type="InterPro" id="IPR011264">
    <property type="entry name" value="BADH"/>
</dbReference>
<dbReference type="NCBIfam" id="TIGR01804">
    <property type="entry name" value="BADH"/>
    <property type="match status" value="1"/>
</dbReference>
<dbReference type="NCBIfam" id="NF009725">
    <property type="entry name" value="PRK13252.1"/>
    <property type="match status" value="1"/>
</dbReference>
<dbReference type="PANTHER" id="PTHR11699">
    <property type="entry name" value="ALDEHYDE DEHYDROGENASE-RELATED"/>
    <property type="match status" value="1"/>
</dbReference>
<dbReference type="Pfam" id="PF00171">
    <property type="entry name" value="Aldedh"/>
    <property type="match status" value="1"/>
</dbReference>
<dbReference type="SUPFAM" id="SSF53720">
    <property type="entry name" value="ALDH-like"/>
    <property type="match status" value="1"/>
</dbReference>
<dbReference type="PROSITE" id="PS00070">
    <property type="entry name" value="ALDEHYDE_DEHYDR_CYS"/>
    <property type="match status" value="1"/>
</dbReference>
<dbReference type="PROSITE" id="PS00687">
    <property type="entry name" value="ALDEHYDE_DEHYDR_GLU"/>
    <property type="match status" value="1"/>
</dbReference>
<protein>
    <recommendedName>
        <fullName evidence="1">Betaine aldehyde dehydrogenase</fullName>
        <shortName evidence="1">BADH</shortName>
        <ecNumber evidence="1">1.2.1.8</ecNumber>
    </recommendedName>
</protein>
<comment type="function">
    <text evidence="1">Involved in the biosynthesis of the osmoprotectant glycine betaine. Catalyzes the irreversible oxidation of betaine aldehyde to the corresponding acid.</text>
</comment>
<comment type="catalytic activity">
    <reaction evidence="1">
        <text>betaine aldehyde + NAD(+) + H2O = glycine betaine + NADH + 2 H(+)</text>
        <dbReference type="Rhea" id="RHEA:15305"/>
        <dbReference type="ChEBI" id="CHEBI:15377"/>
        <dbReference type="ChEBI" id="CHEBI:15378"/>
        <dbReference type="ChEBI" id="CHEBI:15710"/>
        <dbReference type="ChEBI" id="CHEBI:17750"/>
        <dbReference type="ChEBI" id="CHEBI:57540"/>
        <dbReference type="ChEBI" id="CHEBI:57945"/>
        <dbReference type="EC" id="1.2.1.8"/>
    </reaction>
    <physiologicalReaction direction="left-to-right" evidence="1">
        <dbReference type="Rhea" id="RHEA:15306"/>
    </physiologicalReaction>
</comment>
<comment type="cofactor">
    <cofactor evidence="1">
        <name>K(+)</name>
        <dbReference type="ChEBI" id="CHEBI:29103"/>
    </cofactor>
    <text evidence="1">Binds 2 potassium ions per subunit.</text>
</comment>
<comment type="pathway">
    <text evidence="1">Amine and polyamine biosynthesis; betaine biosynthesis via choline pathway; betaine from betaine aldehyde: step 1/1.</text>
</comment>
<comment type="subunit">
    <text evidence="1">Dimer of dimers.</text>
</comment>
<comment type="similarity">
    <text evidence="1">Belongs to the aldehyde dehydrogenase family.</text>
</comment>
<reference key="1">
    <citation type="journal article" date="2008" name="J. Bacteriol.">
        <title>The pangenome structure of Escherichia coli: comparative genomic analysis of E. coli commensal and pathogenic isolates.</title>
        <authorList>
            <person name="Rasko D.A."/>
            <person name="Rosovitz M.J."/>
            <person name="Myers G.S.A."/>
            <person name="Mongodin E.F."/>
            <person name="Fricke W.F."/>
            <person name="Gajer P."/>
            <person name="Crabtree J."/>
            <person name="Sebaihia M."/>
            <person name="Thomson N.R."/>
            <person name="Chaudhuri R."/>
            <person name="Henderson I.R."/>
            <person name="Sperandio V."/>
            <person name="Ravel J."/>
        </authorList>
    </citation>
    <scope>NUCLEOTIDE SEQUENCE [LARGE SCALE GENOMIC DNA]</scope>
    <source>
        <strain>E24377A / ETEC</strain>
    </source>
</reference>
<feature type="chain" id="PRO_1000062268" description="Betaine aldehyde dehydrogenase">
    <location>
        <begin position="1"/>
        <end position="490"/>
    </location>
</feature>
<feature type="active site" description="Charge relay system" evidence="1">
    <location>
        <position position="162"/>
    </location>
</feature>
<feature type="active site" description="Proton acceptor" evidence="1">
    <location>
        <position position="252"/>
    </location>
</feature>
<feature type="active site" description="Nucleophile" evidence="1">
    <location>
        <position position="286"/>
    </location>
</feature>
<feature type="active site" description="Charge relay system" evidence="1">
    <location>
        <position position="464"/>
    </location>
</feature>
<feature type="binding site" evidence="1">
    <location>
        <position position="26"/>
    </location>
    <ligand>
        <name>K(+)</name>
        <dbReference type="ChEBI" id="CHEBI:29103"/>
        <label>1</label>
    </ligand>
</feature>
<feature type="binding site" evidence="1">
    <location>
        <position position="27"/>
    </location>
    <ligand>
        <name>K(+)</name>
        <dbReference type="ChEBI" id="CHEBI:29103"/>
        <label>1</label>
    </ligand>
</feature>
<feature type="binding site" evidence="1">
    <location>
        <position position="93"/>
    </location>
    <ligand>
        <name>K(+)</name>
        <dbReference type="ChEBI" id="CHEBI:29103"/>
        <label>1</label>
    </ligand>
</feature>
<feature type="binding site" evidence="1">
    <location>
        <begin position="150"/>
        <end position="152"/>
    </location>
    <ligand>
        <name>NAD(+)</name>
        <dbReference type="ChEBI" id="CHEBI:57540"/>
    </ligand>
</feature>
<feature type="binding site" evidence="1">
    <location>
        <begin position="176"/>
        <end position="179"/>
    </location>
    <ligand>
        <name>NAD(+)</name>
        <dbReference type="ChEBI" id="CHEBI:57540"/>
    </ligand>
</feature>
<feature type="binding site" evidence="1">
    <location>
        <position position="180"/>
    </location>
    <ligand>
        <name>K(+)</name>
        <dbReference type="ChEBI" id="CHEBI:29103"/>
        <label>1</label>
    </ligand>
</feature>
<feature type="binding site" evidence="1">
    <location>
        <begin position="230"/>
        <end position="233"/>
    </location>
    <ligand>
        <name>NAD(+)</name>
        <dbReference type="ChEBI" id="CHEBI:57540"/>
    </ligand>
</feature>
<feature type="binding site" evidence="1">
    <location>
        <position position="246"/>
    </location>
    <ligand>
        <name>K(+)</name>
        <dbReference type="ChEBI" id="CHEBI:29103"/>
        <label>2</label>
    </ligand>
</feature>
<feature type="binding site" evidence="1">
    <location>
        <position position="254"/>
    </location>
    <ligand>
        <name>NAD(+)</name>
        <dbReference type="ChEBI" id="CHEBI:57540"/>
    </ligand>
</feature>
<feature type="binding site" description="covalent" evidence="1">
    <location>
        <position position="286"/>
    </location>
    <ligand>
        <name>NAD(+)</name>
        <dbReference type="ChEBI" id="CHEBI:57540"/>
    </ligand>
</feature>
<feature type="binding site" evidence="1">
    <location>
        <position position="387"/>
    </location>
    <ligand>
        <name>NAD(+)</name>
        <dbReference type="ChEBI" id="CHEBI:57540"/>
    </ligand>
</feature>
<feature type="binding site" evidence="1">
    <location>
        <position position="457"/>
    </location>
    <ligand>
        <name>K(+)</name>
        <dbReference type="ChEBI" id="CHEBI:29103"/>
        <label>2</label>
    </ligand>
</feature>
<feature type="binding site" evidence="1">
    <location>
        <position position="460"/>
    </location>
    <ligand>
        <name>K(+)</name>
        <dbReference type="ChEBI" id="CHEBI:29103"/>
        <label>2</label>
    </ligand>
</feature>
<feature type="site" description="Seems to be a necessary countercharge to the potassium cations" evidence="1">
    <location>
        <position position="248"/>
    </location>
</feature>
<feature type="modified residue" description="Cysteine sulfenic acid (-SOH)" evidence="1">
    <location>
        <position position="286"/>
    </location>
</feature>
<evidence type="ECO:0000255" key="1">
    <source>
        <dbReference type="HAMAP-Rule" id="MF_00804"/>
    </source>
</evidence>
<name>BETB_ECO24</name>
<accession>A7ZI51</accession>
<gene>
    <name evidence="1" type="primary">betB</name>
    <name type="ordered locus">EcE24377A_0327</name>
</gene>
<sequence>MSRMAEQQLYIHGGYTSATSGRTFETINPANGNVLATVQAAGREDVDRAVKSAQQGQKIWAAMTAMERSRILRRAVDILRERNDELAKLETLDTGKAYSETSTVDIVTGADVLEYYAGLIPSLEGSQIPLRETSFVYTRREPLGVVAGIGAWNYPIQIALWKSAPALAAGNAMIFKPSEVTPLTALKLAEIYSEAGLPDGVFNVLPGVGAETGQYLTEHPGIAKVSFTGGVASGKKVMANSAASSLKEVTMELGGKSPLIVFDDADLDLAADIAMMANFFSSGQVCTNGTRVFVPAKCKAAFEQKILARVERIRAGDVFDPQTNFGPLVSFPHRDNVLRYIVKGKEEGARVLCGGDVLKGDGLDNGAWVAPTVFTDCSDEMTIVREEIFGPVMSILTYESEEEVIRRANDTDYGLAAGIVTADLNRAHRVIHQLEAGICWINTWGESPAEMPVGGYKHSGIGRENGVMTLQSYTQVKSIQVEMAKFQSIF</sequence>
<keyword id="KW-0479">Metal-binding</keyword>
<keyword id="KW-0520">NAD</keyword>
<keyword id="KW-0521">NADP</keyword>
<keyword id="KW-0558">Oxidation</keyword>
<keyword id="KW-0560">Oxidoreductase</keyword>
<keyword id="KW-0630">Potassium</keyword>
<keyword id="KW-1185">Reference proteome</keyword>
<organism>
    <name type="scientific">Escherichia coli O139:H28 (strain E24377A / ETEC)</name>
    <dbReference type="NCBI Taxonomy" id="331111"/>
    <lineage>
        <taxon>Bacteria</taxon>
        <taxon>Pseudomonadati</taxon>
        <taxon>Pseudomonadota</taxon>
        <taxon>Gammaproteobacteria</taxon>
        <taxon>Enterobacterales</taxon>
        <taxon>Enterobacteriaceae</taxon>
        <taxon>Escherichia</taxon>
    </lineage>
</organism>